<accession>Q1C2A4</accession>
<name>TPIS_YERPA</name>
<proteinExistence type="inferred from homology"/>
<feature type="chain" id="PRO_0000307600" description="Triosephosphate isomerase">
    <location>
        <begin position="1"/>
        <end position="255"/>
    </location>
</feature>
<feature type="active site" description="Electrophile" evidence="1">
    <location>
        <position position="95"/>
    </location>
</feature>
<feature type="active site" description="Proton acceptor" evidence="1">
    <location>
        <position position="167"/>
    </location>
</feature>
<feature type="binding site" evidence="1">
    <location>
        <begin position="9"/>
        <end position="11"/>
    </location>
    <ligand>
        <name>substrate</name>
    </ligand>
</feature>
<feature type="binding site" evidence="1">
    <location>
        <position position="173"/>
    </location>
    <ligand>
        <name>substrate</name>
    </ligand>
</feature>
<feature type="binding site" evidence="1">
    <location>
        <position position="212"/>
    </location>
    <ligand>
        <name>substrate</name>
    </ligand>
</feature>
<feature type="binding site" evidence="1">
    <location>
        <begin position="233"/>
        <end position="234"/>
    </location>
    <ligand>
        <name>substrate</name>
    </ligand>
</feature>
<reference key="1">
    <citation type="journal article" date="2006" name="J. Bacteriol.">
        <title>Complete genome sequence of Yersinia pestis strains Antiqua and Nepal516: evidence of gene reduction in an emerging pathogen.</title>
        <authorList>
            <person name="Chain P.S.G."/>
            <person name="Hu P."/>
            <person name="Malfatti S.A."/>
            <person name="Radnedge L."/>
            <person name="Larimer F."/>
            <person name="Vergez L.M."/>
            <person name="Worsham P."/>
            <person name="Chu M.C."/>
            <person name="Andersen G.L."/>
        </authorList>
    </citation>
    <scope>NUCLEOTIDE SEQUENCE [LARGE SCALE GENOMIC DNA]</scope>
    <source>
        <strain>Antiqua</strain>
    </source>
</reference>
<keyword id="KW-0963">Cytoplasm</keyword>
<keyword id="KW-0312">Gluconeogenesis</keyword>
<keyword id="KW-0324">Glycolysis</keyword>
<keyword id="KW-0413">Isomerase</keyword>
<protein>
    <recommendedName>
        <fullName evidence="1">Triosephosphate isomerase</fullName>
        <shortName evidence="1">TIM</shortName>
        <shortName evidence="1">TPI</shortName>
        <ecNumber evidence="1">5.3.1.1</ecNumber>
    </recommendedName>
    <alternativeName>
        <fullName evidence="1">Triose-phosphate isomerase</fullName>
    </alternativeName>
</protein>
<dbReference type="EC" id="5.3.1.1" evidence="1"/>
<dbReference type="EMBL" id="CP000308">
    <property type="protein sequence ID" value="ABG15418.1"/>
    <property type="molecule type" value="Genomic_DNA"/>
</dbReference>
<dbReference type="RefSeq" id="WP_002208959.1">
    <property type="nucleotide sequence ID" value="NZ_CP009906.1"/>
</dbReference>
<dbReference type="SMR" id="Q1C2A4"/>
<dbReference type="GeneID" id="57974507"/>
<dbReference type="KEGG" id="ypa:YPA_3456"/>
<dbReference type="UniPathway" id="UPA00109">
    <property type="reaction ID" value="UER00189"/>
</dbReference>
<dbReference type="UniPathway" id="UPA00138"/>
<dbReference type="Proteomes" id="UP000001971">
    <property type="component" value="Chromosome"/>
</dbReference>
<dbReference type="GO" id="GO:0005829">
    <property type="term" value="C:cytosol"/>
    <property type="evidence" value="ECO:0007669"/>
    <property type="project" value="TreeGrafter"/>
</dbReference>
<dbReference type="GO" id="GO:0004807">
    <property type="term" value="F:triose-phosphate isomerase activity"/>
    <property type="evidence" value="ECO:0007669"/>
    <property type="project" value="UniProtKB-UniRule"/>
</dbReference>
<dbReference type="GO" id="GO:0006094">
    <property type="term" value="P:gluconeogenesis"/>
    <property type="evidence" value="ECO:0007669"/>
    <property type="project" value="UniProtKB-UniRule"/>
</dbReference>
<dbReference type="GO" id="GO:0046166">
    <property type="term" value="P:glyceraldehyde-3-phosphate biosynthetic process"/>
    <property type="evidence" value="ECO:0007669"/>
    <property type="project" value="TreeGrafter"/>
</dbReference>
<dbReference type="GO" id="GO:0019563">
    <property type="term" value="P:glycerol catabolic process"/>
    <property type="evidence" value="ECO:0007669"/>
    <property type="project" value="TreeGrafter"/>
</dbReference>
<dbReference type="GO" id="GO:0006096">
    <property type="term" value="P:glycolytic process"/>
    <property type="evidence" value="ECO:0007669"/>
    <property type="project" value="UniProtKB-UniRule"/>
</dbReference>
<dbReference type="CDD" id="cd00311">
    <property type="entry name" value="TIM"/>
    <property type="match status" value="1"/>
</dbReference>
<dbReference type="FunFam" id="3.20.20.70:FF:000020">
    <property type="entry name" value="Triosephosphate isomerase"/>
    <property type="match status" value="1"/>
</dbReference>
<dbReference type="Gene3D" id="3.20.20.70">
    <property type="entry name" value="Aldolase class I"/>
    <property type="match status" value="1"/>
</dbReference>
<dbReference type="HAMAP" id="MF_00147_B">
    <property type="entry name" value="TIM_B"/>
    <property type="match status" value="1"/>
</dbReference>
<dbReference type="InterPro" id="IPR013785">
    <property type="entry name" value="Aldolase_TIM"/>
</dbReference>
<dbReference type="InterPro" id="IPR035990">
    <property type="entry name" value="TIM_sf"/>
</dbReference>
<dbReference type="InterPro" id="IPR022896">
    <property type="entry name" value="TrioseP_Isoase_bac/euk"/>
</dbReference>
<dbReference type="InterPro" id="IPR000652">
    <property type="entry name" value="Triosephosphate_isomerase"/>
</dbReference>
<dbReference type="InterPro" id="IPR020861">
    <property type="entry name" value="Triosephosphate_isomerase_AS"/>
</dbReference>
<dbReference type="NCBIfam" id="TIGR00419">
    <property type="entry name" value="tim"/>
    <property type="match status" value="1"/>
</dbReference>
<dbReference type="PANTHER" id="PTHR21139">
    <property type="entry name" value="TRIOSEPHOSPHATE ISOMERASE"/>
    <property type="match status" value="1"/>
</dbReference>
<dbReference type="PANTHER" id="PTHR21139:SF42">
    <property type="entry name" value="TRIOSEPHOSPHATE ISOMERASE"/>
    <property type="match status" value="1"/>
</dbReference>
<dbReference type="Pfam" id="PF00121">
    <property type="entry name" value="TIM"/>
    <property type="match status" value="1"/>
</dbReference>
<dbReference type="SUPFAM" id="SSF51351">
    <property type="entry name" value="Triosephosphate isomerase (TIM)"/>
    <property type="match status" value="1"/>
</dbReference>
<dbReference type="PROSITE" id="PS00171">
    <property type="entry name" value="TIM_1"/>
    <property type="match status" value="1"/>
</dbReference>
<dbReference type="PROSITE" id="PS51440">
    <property type="entry name" value="TIM_2"/>
    <property type="match status" value="1"/>
</dbReference>
<sequence>MRHPLVMGNWKLNGSTHMVNELIAGLRKELSTVDGCGVAIAPPAIYLNQAKHELAGSRIALGAQNVDVNLSGAFTGETSAEMLKDIGAQYIIIGHSERRTYHQESDELIAKKFGVLKEIGLIPVLCIGESEAENEAGQTEAVCAKQLDAVLNTLGVKAFEGAVIAYEPIWAIGTGKSATPAQAQAVHKFIRDHIAKQDAAVAAQVIIQYGGSVNDKNAAELFTQPDIDGALVGGASLKADAFAVIVKAAAKAKKA</sequence>
<gene>
    <name evidence="1" type="primary">tpiA</name>
    <name type="ordered locus">YPA_3456</name>
</gene>
<comment type="function">
    <text evidence="1">Involved in the gluconeogenesis. Catalyzes stereospecifically the conversion of dihydroxyacetone phosphate (DHAP) to D-glyceraldehyde-3-phosphate (G3P).</text>
</comment>
<comment type="catalytic activity">
    <reaction evidence="1">
        <text>D-glyceraldehyde 3-phosphate = dihydroxyacetone phosphate</text>
        <dbReference type="Rhea" id="RHEA:18585"/>
        <dbReference type="ChEBI" id="CHEBI:57642"/>
        <dbReference type="ChEBI" id="CHEBI:59776"/>
        <dbReference type="EC" id="5.3.1.1"/>
    </reaction>
</comment>
<comment type="pathway">
    <text evidence="1">Carbohydrate biosynthesis; gluconeogenesis.</text>
</comment>
<comment type="pathway">
    <text evidence="1">Carbohydrate degradation; glycolysis; D-glyceraldehyde 3-phosphate from glycerone phosphate: step 1/1.</text>
</comment>
<comment type="subunit">
    <text evidence="1">Homodimer.</text>
</comment>
<comment type="subcellular location">
    <subcellularLocation>
        <location evidence="1">Cytoplasm</location>
    </subcellularLocation>
</comment>
<comment type="similarity">
    <text evidence="1">Belongs to the triosephosphate isomerase family.</text>
</comment>
<evidence type="ECO:0000255" key="1">
    <source>
        <dbReference type="HAMAP-Rule" id="MF_00147"/>
    </source>
</evidence>
<organism>
    <name type="scientific">Yersinia pestis bv. Antiqua (strain Antiqua)</name>
    <dbReference type="NCBI Taxonomy" id="360102"/>
    <lineage>
        <taxon>Bacteria</taxon>
        <taxon>Pseudomonadati</taxon>
        <taxon>Pseudomonadota</taxon>
        <taxon>Gammaproteobacteria</taxon>
        <taxon>Enterobacterales</taxon>
        <taxon>Yersiniaceae</taxon>
        <taxon>Yersinia</taxon>
    </lineage>
</organism>